<dbReference type="EC" id="6.3.3.2"/>
<dbReference type="EMBL" id="AL032656">
    <property type="protein sequence ID" value="CAA21728.1"/>
    <property type="molecule type" value="Genomic_DNA"/>
</dbReference>
<dbReference type="PIR" id="T26418">
    <property type="entry name" value="T26418"/>
</dbReference>
<dbReference type="RefSeq" id="NP_492692.1">
    <property type="nucleotide sequence ID" value="NM_060291.7"/>
</dbReference>
<dbReference type="SMR" id="Q9XWE6"/>
<dbReference type="BioGRID" id="55484">
    <property type="interactions" value="7"/>
</dbReference>
<dbReference type="FunCoup" id="Q9XWE6">
    <property type="interactions" value="1376"/>
</dbReference>
<dbReference type="STRING" id="6239.Y106G6E.4.1"/>
<dbReference type="PaxDb" id="6239-Y106G6E.4"/>
<dbReference type="PeptideAtlas" id="Q9XWE6"/>
<dbReference type="EnsemblMetazoa" id="Y106G6E.4.1">
    <property type="protein sequence ID" value="Y106G6E.4.1"/>
    <property type="gene ID" value="WBGene00013708"/>
</dbReference>
<dbReference type="GeneID" id="190922"/>
<dbReference type="KEGG" id="cel:CELE_Y106G6E.4"/>
<dbReference type="UCSC" id="Y106G6E.4">
    <property type="organism name" value="c. elegans"/>
</dbReference>
<dbReference type="AGR" id="WB:WBGene00013708"/>
<dbReference type="CTD" id="190922"/>
<dbReference type="WormBase" id="Y106G6E.4">
    <property type="protein sequence ID" value="CE20408"/>
    <property type="gene ID" value="WBGene00013708"/>
</dbReference>
<dbReference type="eggNOG" id="KOG3093">
    <property type="taxonomic scope" value="Eukaryota"/>
</dbReference>
<dbReference type="GeneTree" id="ENSGT00390000017791"/>
<dbReference type="HOGENOM" id="CLU_066245_2_1_1"/>
<dbReference type="InParanoid" id="Q9XWE6"/>
<dbReference type="OMA" id="STIYPCQ"/>
<dbReference type="OrthoDB" id="2015992at2759"/>
<dbReference type="PhylomeDB" id="Q9XWE6"/>
<dbReference type="Reactome" id="R-CEL-196757">
    <property type="pathway name" value="Metabolism of folate and pterines"/>
</dbReference>
<dbReference type="PRO" id="PR:Q9XWE6"/>
<dbReference type="Proteomes" id="UP000001940">
    <property type="component" value="Chromosome I"/>
</dbReference>
<dbReference type="Bgee" id="WBGene00013708">
    <property type="expression patterns" value="Expressed in embryo and 4 other cell types or tissues"/>
</dbReference>
<dbReference type="GO" id="GO:0005737">
    <property type="term" value="C:cytoplasm"/>
    <property type="evidence" value="ECO:0000318"/>
    <property type="project" value="GO_Central"/>
</dbReference>
<dbReference type="GO" id="GO:0005739">
    <property type="term" value="C:mitochondrion"/>
    <property type="evidence" value="ECO:0000318"/>
    <property type="project" value="GO_Central"/>
</dbReference>
<dbReference type="GO" id="GO:0030272">
    <property type="term" value="F:5-formyltetrahydrofolate cyclo-ligase activity"/>
    <property type="evidence" value="ECO:0000318"/>
    <property type="project" value="GO_Central"/>
</dbReference>
<dbReference type="GO" id="GO:0005524">
    <property type="term" value="F:ATP binding"/>
    <property type="evidence" value="ECO:0007669"/>
    <property type="project" value="UniProtKB-KW"/>
</dbReference>
<dbReference type="GO" id="GO:0046872">
    <property type="term" value="F:metal ion binding"/>
    <property type="evidence" value="ECO:0007669"/>
    <property type="project" value="UniProtKB-KW"/>
</dbReference>
<dbReference type="GO" id="GO:0009396">
    <property type="term" value="P:folic acid-containing compound biosynthetic process"/>
    <property type="evidence" value="ECO:0000318"/>
    <property type="project" value="GO_Central"/>
</dbReference>
<dbReference type="GO" id="GO:0035999">
    <property type="term" value="P:tetrahydrofolate interconversion"/>
    <property type="evidence" value="ECO:0000318"/>
    <property type="project" value="GO_Central"/>
</dbReference>
<dbReference type="FunFam" id="3.40.50.10420:FF:000007">
    <property type="entry name" value="5-formyltetrahydrofolate cyclo-ligase"/>
    <property type="match status" value="1"/>
</dbReference>
<dbReference type="Gene3D" id="3.40.50.10420">
    <property type="entry name" value="NagB/RpiA/CoA transferase-like"/>
    <property type="match status" value="1"/>
</dbReference>
<dbReference type="InterPro" id="IPR002698">
    <property type="entry name" value="FTHF_cligase"/>
</dbReference>
<dbReference type="InterPro" id="IPR024185">
    <property type="entry name" value="FTHF_cligase-like_sf"/>
</dbReference>
<dbReference type="InterPro" id="IPR037171">
    <property type="entry name" value="NagB/RpiA_transferase-like"/>
</dbReference>
<dbReference type="NCBIfam" id="TIGR02727">
    <property type="entry name" value="MTHFS_bact"/>
    <property type="match status" value="1"/>
</dbReference>
<dbReference type="PANTHER" id="PTHR23407:SF1">
    <property type="entry name" value="5-FORMYLTETRAHYDROFOLATE CYCLO-LIGASE"/>
    <property type="match status" value="1"/>
</dbReference>
<dbReference type="PANTHER" id="PTHR23407">
    <property type="entry name" value="ATPASE INHIBITOR/5-FORMYLTETRAHYDROFOLATE CYCLO-LIGASE"/>
    <property type="match status" value="1"/>
</dbReference>
<dbReference type="Pfam" id="PF01812">
    <property type="entry name" value="5-FTHF_cyc-lig"/>
    <property type="match status" value="1"/>
</dbReference>
<dbReference type="PIRSF" id="PIRSF006806">
    <property type="entry name" value="FTHF_cligase"/>
    <property type="match status" value="1"/>
</dbReference>
<dbReference type="SUPFAM" id="SSF100950">
    <property type="entry name" value="NagB/RpiA/CoA transferase-like"/>
    <property type="match status" value="1"/>
</dbReference>
<gene>
    <name type="ORF">Y106G6E.4</name>
</gene>
<organism>
    <name type="scientific">Caenorhabditis elegans</name>
    <dbReference type="NCBI Taxonomy" id="6239"/>
    <lineage>
        <taxon>Eukaryota</taxon>
        <taxon>Metazoa</taxon>
        <taxon>Ecdysozoa</taxon>
        <taxon>Nematoda</taxon>
        <taxon>Chromadorea</taxon>
        <taxon>Rhabditida</taxon>
        <taxon>Rhabditina</taxon>
        <taxon>Rhabditomorpha</taxon>
        <taxon>Rhabditoidea</taxon>
        <taxon>Rhabditidae</taxon>
        <taxon>Peloderinae</taxon>
        <taxon>Caenorhabditis</taxon>
    </lineage>
</organism>
<proteinExistence type="inferred from homology"/>
<reference key="1">
    <citation type="journal article" date="1998" name="Science">
        <title>Genome sequence of the nematode C. elegans: a platform for investigating biology.</title>
        <authorList>
            <consortium name="The C. elegans sequencing consortium"/>
        </authorList>
    </citation>
    <scope>NUCLEOTIDE SEQUENCE [LARGE SCALE GENOMIC DNA]</scope>
    <source>
        <strain>Bristol N2</strain>
    </source>
</reference>
<feature type="chain" id="PRO_0000200278" description="Probable 5-formyltetrahydrofolate cyclo-ligase">
    <location>
        <begin position="1"/>
        <end position="206"/>
    </location>
</feature>
<feature type="binding site" evidence="1">
    <location>
        <begin position="8"/>
        <end position="12"/>
    </location>
    <ligand>
        <name>ATP</name>
        <dbReference type="ChEBI" id="CHEBI:30616"/>
    </ligand>
</feature>
<feature type="binding site" evidence="1">
    <location>
        <position position="12"/>
    </location>
    <ligand>
        <name>ATP</name>
        <dbReference type="ChEBI" id="CHEBI:30616"/>
    </ligand>
</feature>
<feature type="binding site" evidence="1">
    <location>
        <position position="54"/>
    </location>
    <ligand>
        <name>substrate</name>
    </ligand>
</feature>
<feature type="binding site" evidence="1">
    <location>
        <position position="59"/>
    </location>
    <ligand>
        <name>substrate</name>
    </ligand>
</feature>
<feature type="binding site" evidence="1">
    <location>
        <begin position="143"/>
        <end position="151"/>
    </location>
    <ligand>
        <name>ATP</name>
        <dbReference type="ChEBI" id="CHEBI:30616"/>
    </ligand>
</feature>
<feature type="binding site" evidence="1">
    <location>
        <begin position="146"/>
        <end position="150"/>
    </location>
    <ligand>
        <name>substrate</name>
    </ligand>
</feature>
<feature type="binding site" evidence="1">
    <location>
        <position position="152"/>
    </location>
    <ligand>
        <name>Mg(2+)</name>
        <dbReference type="ChEBI" id="CHEBI:18420"/>
    </ligand>
</feature>
<feature type="binding site" evidence="1">
    <location>
        <position position="188"/>
    </location>
    <ligand>
        <name>Mg(2+)</name>
        <dbReference type="ChEBI" id="CHEBI:18420"/>
    </ligand>
</feature>
<protein>
    <recommendedName>
        <fullName>Probable 5-formyltetrahydrofolate cyclo-ligase</fullName>
        <ecNumber>6.3.3.2</ecNumber>
    </recommendedName>
    <alternativeName>
        <fullName>5,10-methenyl-tetrahydrofolate synthetase</fullName>
        <shortName>MTHFS</shortName>
        <shortName>Methenyl-THF synthetase</shortName>
    </alternativeName>
</protein>
<comment type="function">
    <text evidence="1">Contributes to tetrahydrofolate metabolism. Helps regulate carbon flow through the folate-dependent one-carbon metabolic network that supplies carbon for the biosynthesis of purines, thymidine and amino acids. Catalyzes the irreversible conversion of 5-formyltetrahydrofolate (5-CHO-H(4)PteGlu) to yield 5,10-methenyltetrahydrofolate (By similarity).</text>
</comment>
<comment type="catalytic activity">
    <reaction>
        <text>(6S)-5-formyl-5,6,7,8-tetrahydrofolate + ATP = (6R)-5,10-methenyltetrahydrofolate + ADP + phosphate</text>
        <dbReference type="Rhea" id="RHEA:10488"/>
        <dbReference type="ChEBI" id="CHEBI:30616"/>
        <dbReference type="ChEBI" id="CHEBI:43474"/>
        <dbReference type="ChEBI" id="CHEBI:57455"/>
        <dbReference type="ChEBI" id="CHEBI:57457"/>
        <dbReference type="ChEBI" id="CHEBI:456216"/>
        <dbReference type="EC" id="6.3.3.2"/>
    </reaction>
</comment>
<comment type="cofactor">
    <cofactor evidence="1">
        <name>Mg(2+)</name>
        <dbReference type="ChEBI" id="CHEBI:18420"/>
    </cofactor>
</comment>
<comment type="subunit">
    <text evidence="1">Monomer.</text>
</comment>
<comment type="subcellular location">
    <subcellularLocation>
        <location evidence="1">Cytoplasm</location>
    </subcellularLocation>
</comment>
<comment type="similarity">
    <text evidence="2">Belongs to the 5-formyltetrahydrofolate cyclo-ligase family.</text>
</comment>
<keyword id="KW-0067">ATP-binding</keyword>
<keyword id="KW-0963">Cytoplasm</keyword>
<keyword id="KW-0436">Ligase</keyword>
<keyword id="KW-0460">Magnesium</keyword>
<keyword id="KW-0479">Metal-binding</keyword>
<keyword id="KW-0547">Nucleotide-binding</keyword>
<keyword id="KW-1185">Reference proteome</keyword>
<evidence type="ECO:0000250" key="1"/>
<evidence type="ECO:0000305" key="2"/>
<name>MTHFS_CAEEL</name>
<sequence>MSAIKEVKSELRQFMKTLLGKISKEETQRQTEAVFEKIIESKWFQESKRLSVYVSTSGEIQTDSIIQKALEMGKEVFIPQFTKGSTAMDMVRVPDQTAFDNLPSTLWGIRQPEPKWKWQSYHETGPLDLILAPGVAFSPYGLRCGHGKGYYDRFFSTHHKHFPENSPKKIGLALREQIIGTIPISETDVELDEVIYEGETIIFDTI</sequence>
<accession>Q9XWE6</accession>